<organism>
    <name type="scientific">Carboxydothermus hydrogenoformans (strain ATCC BAA-161 / DSM 6008 / Z-2901)</name>
    <dbReference type="NCBI Taxonomy" id="246194"/>
    <lineage>
        <taxon>Bacteria</taxon>
        <taxon>Bacillati</taxon>
        <taxon>Bacillota</taxon>
        <taxon>Clostridia</taxon>
        <taxon>Thermoanaerobacterales</taxon>
        <taxon>Thermoanaerobacteraceae</taxon>
        <taxon>Carboxydothermus</taxon>
    </lineage>
</organism>
<accession>Q3ACU3</accession>
<evidence type="ECO:0000255" key="1">
    <source>
        <dbReference type="HAMAP-Rule" id="MF_00632"/>
    </source>
</evidence>
<sequence>MASDYSFDIVSEVNLPEVKNAVNQALKEISQRYDFKGSNVEIELNEKEKEIRITADDEYRLKRAVDVLEAKLVKRQVSLKFLDYGKIEPALGGTVKQTIKLKSGIPREKAKEIIDTIKQTKLKVQTQILDDKLRVSGKKKDDLQAVIKLLKEKEFGLVLQFTNYR</sequence>
<reference key="1">
    <citation type="journal article" date="2005" name="PLoS Genet.">
        <title>Life in hot carbon monoxide: the complete genome sequence of Carboxydothermus hydrogenoformans Z-2901.</title>
        <authorList>
            <person name="Wu M."/>
            <person name="Ren Q."/>
            <person name="Durkin A.S."/>
            <person name="Daugherty S.C."/>
            <person name="Brinkac L.M."/>
            <person name="Dodson R.J."/>
            <person name="Madupu R."/>
            <person name="Sullivan S.A."/>
            <person name="Kolonay J.F."/>
            <person name="Nelson W.C."/>
            <person name="Tallon L.J."/>
            <person name="Jones K.M."/>
            <person name="Ulrich L.E."/>
            <person name="Gonzalez J.M."/>
            <person name="Zhulin I.B."/>
            <person name="Robb F.T."/>
            <person name="Eisen J.A."/>
        </authorList>
    </citation>
    <scope>NUCLEOTIDE SEQUENCE [LARGE SCALE GENOMIC DNA]</scope>
    <source>
        <strain>ATCC BAA-161 / DSM 6008 / Z-2901</strain>
    </source>
</reference>
<protein>
    <recommendedName>
        <fullName evidence="1">Nucleotide-binding protein CHY_1197</fullName>
    </recommendedName>
</protein>
<feature type="chain" id="PRO_0000261928" description="Nucleotide-binding protein CHY_1197">
    <location>
        <begin position="1"/>
        <end position="165"/>
    </location>
</feature>
<dbReference type="EMBL" id="CP000141">
    <property type="protein sequence ID" value="ABB14974.1"/>
    <property type="molecule type" value="Genomic_DNA"/>
</dbReference>
<dbReference type="RefSeq" id="WP_011344117.1">
    <property type="nucleotide sequence ID" value="NC_007503.1"/>
</dbReference>
<dbReference type="SMR" id="Q3ACU3"/>
<dbReference type="FunCoup" id="Q3ACU3">
    <property type="interactions" value="109"/>
</dbReference>
<dbReference type="STRING" id="246194.CHY_1197"/>
<dbReference type="KEGG" id="chy:CHY_1197"/>
<dbReference type="eggNOG" id="COG1666">
    <property type="taxonomic scope" value="Bacteria"/>
</dbReference>
<dbReference type="HOGENOM" id="CLU_099839_1_0_9"/>
<dbReference type="InParanoid" id="Q3ACU3"/>
<dbReference type="OrthoDB" id="9801447at2"/>
<dbReference type="Proteomes" id="UP000002706">
    <property type="component" value="Chromosome"/>
</dbReference>
<dbReference type="GO" id="GO:0005829">
    <property type="term" value="C:cytosol"/>
    <property type="evidence" value="ECO:0007669"/>
    <property type="project" value="TreeGrafter"/>
</dbReference>
<dbReference type="GO" id="GO:0000166">
    <property type="term" value="F:nucleotide binding"/>
    <property type="evidence" value="ECO:0007669"/>
    <property type="project" value="TreeGrafter"/>
</dbReference>
<dbReference type="CDD" id="cd11740">
    <property type="entry name" value="YajQ_like"/>
    <property type="match status" value="1"/>
</dbReference>
<dbReference type="Gene3D" id="3.30.70.860">
    <property type="match status" value="1"/>
</dbReference>
<dbReference type="Gene3D" id="3.30.70.990">
    <property type="entry name" value="YajQ-like, domain 2"/>
    <property type="match status" value="1"/>
</dbReference>
<dbReference type="HAMAP" id="MF_00632">
    <property type="entry name" value="YajQ"/>
    <property type="match status" value="1"/>
</dbReference>
<dbReference type="InterPro" id="IPR007551">
    <property type="entry name" value="DUF520"/>
</dbReference>
<dbReference type="InterPro" id="IPR035571">
    <property type="entry name" value="UPF0234-like_C"/>
</dbReference>
<dbReference type="InterPro" id="IPR035570">
    <property type="entry name" value="UPF0234_N"/>
</dbReference>
<dbReference type="InterPro" id="IPR036183">
    <property type="entry name" value="YajQ-like_sf"/>
</dbReference>
<dbReference type="NCBIfam" id="NF003819">
    <property type="entry name" value="PRK05412.1"/>
    <property type="match status" value="1"/>
</dbReference>
<dbReference type="PANTHER" id="PTHR30476">
    <property type="entry name" value="UPF0234 PROTEIN YAJQ"/>
    <property type="match status" value="1"/>
</dbReference>
<dbReference type="PANTHER" id="PTHR30476:SF0">
    <property type="entry name" value="UPF0234 PROTEIN YAJQ"/>
    <property type="match status" value="1"/>
</dbReference>
<dbReference type="Pfam" id="PF04461">
    <property type="entry name" value="DUF520"/>
    <property type="match status" value="1"/>
</dbReference>
<dbReference type="SUPFAM" id="SSF89963">
    <property type="entry name" value="YajQ-like"/>
    <property type="match status" value="2"/>
</dbReference>
<gene>
    <name type="ordered locus">CHY_1197</name>
</gene>
<comment type="function">
    <text evidence="1">Nucleotide-binding protein.</text>
</comment>
<comment type="similarity">
    <text evidence="1">Belongs to the YajQ family.</text>
</comment>
<proteinExistence type="inferred from homology"/>
<keyword id="KW-0547">Nucleotide-binding</keyword>
<keyword id="KW-1185">Reference proteome</keyword>
<name>Y1197_CARHZ</name>